<comment type="function">
    <text evidence="1">Involved in the import of threonine and serine into the cell, with the concomitant import of a proton (symport system).</text>
</comment>
<comment type="catalytic activity">
    <reaction evidence="1">
        <text>L-threonine(in) + H(+)(in) = L-threonine(out) + H(+)(out)</text>
        <dbReference type="Rhea" id="RHEA:28883"/>
        <dbReference type="ChEBI" id="CHEBI:15378"/>
        <dbReference type="ChEBI" id="CHEBI:57926"/>
    </reaction>
    <physiologicalReaction direction="right-to-left" evidence="1">
        <dbReference type="Rhea" id="RHEA:28885"/>
    </physiologicalReaction>
</comment>
<comment type="catalytic activity">
    <reaction evidence="1">
        <text>L-serine(in) + H(+)(in) = L-serine(out) + H(+)(out)</text>
        <dbReference type="Rhea" id="RHEA:28887"/>
        <dbReference type="ChEBI" id="CHEBI:15378"/>
        <dbReference type="ChEBI" id="CHEBI:33384"/>
    </reaction>
    <physiologicalReaction direction="right-to-left" evidence="1">
        <dbReference type="Rhea" id="RHEA:28889"/>
    </physiologicalReaction>
</comment>
<comment type="subcellular location">
    <subcellularLocation>
        <location evidence="1">Cell inner membrane</location>
        <topology evidence="1">Multi-pass membrane protein</topology>
    </subcellularLocation>
</comment>
<comment type="similarity">
    <text evidence="1">Belongs to the amino acid/polyamine transporter 2 family. SdaC/TdcC subfamily.</text>
</comment>
<feature type="chain" id="PRO_1000069291" description="Threonine/serine transporter TdcC">
    <location>
        <begin position="1"/>
        <end position="443"/>
    </location>
</feature>
<feature type="transmembrane region" description="Helical" evidence="1">
    <location>
        <begin position="22"/>
        <end position="42"/>
    </location>
</feature>
<feature type="transmembrane region" description="Helical" evidence="1">
    <location>
        <begin position="44"/>
        <end position="64"/>
    </location>
</feature>
<feature type="transmembrane region" description="Helical" evidence="1">
    <location>
        <begin position="97"/>
        <end position="117"/>
    </location>
</feature>
<feature type="transmembrane region" description="Helical" evidence="1">
    <location>
        <begin position="140"/>
        <end position="160"/>
    </location>
</feature>
<feature type="transmembrane region" description="Helical" evidence="1">
    <location>
        <begin position="163"/>
        <end position="183"/>
    </location>
</feature>
<feature type="transmembrane region" description="Helical" evidence="1">
    <location>
        <begin position="207"/>
        <end position="227"/>
    </location>
</feature>
<feature type="transmembrane region" description="Helical" evidence="1">
    <location>
        <begin position="259"/>
        <end position="279"/>
    </location>
</feature>
<feature type="transmembrane region" description="Helical" evidence="1">
    <location>
        <begin position="319"/>
        <end position="339"/>
    </location>
</feature>
<feature type="transmembrane region" description="Helical" evidence="1">
    <location>
        <begin position="366"/>
        <end position="386"/>
    </location>
</feature>
<feature type="transmembrane region" description="Helical" evidence="1">
    <location>
        <begin position="389"/>
        <end position="409"/>
    </location>
</feature>
<feature type="transmembrane region" description="Helical" evidence="1">
    <location>
        <begin position="423"/>
        <end position="443"/>
    </location>
</feature>
<evidence type="ECO:0000255" key="1">
    <source>
        <dbReference type="HAMAP-Rule" id="MF_01583"/>
    </source>
</evidence>
<sequence>MSNTESIIVSQTKTTSWRKSDTTWTLGLFGTAIGAGVLFFPIRAGFGGLIPILLMLVLAYPIAFYCHRALARLCLSGSNPSGNITETVEEHFGKTGGVVITFLYFFAICPLLWIYGVTITNTFMTFWENQLQMPALNRGFVALFLLLLMAFVIWFGKDLMVKVMSFLVFPFIASLILISLSLIPYWNSAVIDQVSMSDLSFTGHDGILVTVWLGISIMVFSFNFSPIVSSFVVSKREEYEGEFGKEFTEQKCSKIIGRASLLMVAVVMFFAFSCLFTLSPQNMAEAKAQNIPVLSYLANHFATMTGTKSTFATVLEYGASIIALVAIFKSFFGHYLGTLEGLNGLVLKFGYKGDKKKVSVGKLNTISMIFIMGSTWVVAYANPNILDLIEAMGAPIIASLLCLLPMFAIRKVPALAKFRGRTENLFVTAVGLLTILNIVYKLF</sequence>
<keyword id="KW-0029">Amino-acid transport</keyword>
<keyword id="KW-0997">Cell inner membrane</keyword>
<keyword id="KW-1003">Cell membrane</keyword>
<keyword id="KW-0472">Membrane</keyword>
<keyword id="KW-0769">Symport</keyword>
<keyword id="KW-0812">Transmembrane</keyword>
<keyword id="KW-1133">Transmembrane helix</keyword>
<keyword id="KW-0813">Transport</keyword>
<gene>
    <name evidence="1" type="primary">tdcC</name>
    <name type="ordered locus">Ent638_3563</name>
</gene>
<name>TDCC_ENT38</name>
<proteinExistence type="inferred from homology"/>
<accession>A4WEU1</accession>
<dbReference type="EMBL" id="CP000653">
    <property type="protein sequence ID" value="ABP62221.1"/>
    <property type="molecule type" value="Genomic_DNA"/>
</dbReference>
<dbReference type="RefSeq" id="WP_015960547.1">
    <property type="nucleotide sequence ID" value="NC_009436.1"/>
</dbReference>
<dbReference type="SMR" id="A4WEU1"/>
<dbReference type="STRING" id="399742.Ent638_3563"/>
<dbReference type="KEGG" id="ent:Ent638_3563"/>
<dbReference type="eggNOG" id="COG0814">
    <property type="taxonomic scope" value="Bacteria"/>
</dbReference>
<dbReference type="HOGENOM" id="CLU_052043_1_1_6"/>
<dbReference type="OrthoDB" id="1627372at2"/>
<dbReference type="Proteomes" id="UP000000230">
    <property type="component" value="Chromosome"/>
</dbReference>
<dbReference type="GO" id="GO:0005886">
    <property type="term" value="C:plasma membrane"/>
    <property type="evidence" value="ECO:0007669"/>
    <property type="project" value="UniProtKB-SubCell"/>
</dbReference>
<dbReference type="GO" id="GO:0015194">
    <property type="term" value="F:L-serine transmembrane transporter activity"/>
    <property type="evidence" value="ECO:0007669"/>
    <property type="project" value="InterPro"/>
</dbReference>
<dbReference type="GO" id="GO:0015293">
    <property type="term" value="F:symporter activity"/>
    <property type="evidence" value="ECO:0007669"/>
    <property type="project" value="UniProtKB-UniRule"/>
</dbReference>
<dbReference type="GO" id="GO:0015565">
    <property type="term" value="F:threonine efflux transmembrane transporter activity"/>
    <property type="evidence" value="ECO:0007669"/>
    <property type="project" value="InterPro"/>
</dbReference>
<dbReference type="Gene3D" id="1.20.1740.10">
    <property type="entry name" value="Amino acid/polyamine transporter I"/>
    <property type="match status" value="1"/>
</dbReference>
<dbReference type="HAMAP" id="MF_01583">
    <property type="entry name" value="Thr_Ser_transp_TdcC"/>
    <property type="match status" value="1"/>
</dbReference>
<dbReference type="InterPro" id="IPR018227">
    <property type="entry name" value="Amino_acid_transport_2"/>
</dbReference>
<dbReference type="InterPro" id="IPR004694">
    <property type="entry name" value="Hydroxy_aa_transpt"/>
</dbReference>
<dbReference type="InterPro" id="IPR023726">
    <property type="entry name" value="Thr/Ser_transpt_TdcC"/>
</dbReference>
<dbReference type="NCBIfam" id="NF010152">
    <property type="entry name" value="PRK13629.1"/>
    <property type="match status" value="1"/>
</dbReference>
<dbReference type="NCBIfam" id="TIGR00814">
    <property type="entry name" value="stp"/>
    <property type="match status" value="1"/>
</dbReference>
<dbReference type="PANTHER" id="PTHR35334">
    <property type="entry name" value="SERINE TRANSPORTER"/>
    <property type="match status" value="1"/>
</dbReference>
<dbReference type="PANTHER" id="PTHR35334:SF1">
    <property type="entry name" value="THREONINE_SERINE TRANSPORTER TDCC"/>
    <property type="match status" value="1"/>
</dbReference>
<dbReference type="Pfam" id="PF03222">
    <property type="entry name" value="Trp_Tyr_perm"/>
    <property type="match status" value="1"/>
</dbReference>
<organism>
    <name type="scientific">Enterobacter sp. (strain 638)</name>
    <dbReference type="NCBI Taxonomy" id="399742"/>
    <lineage>
        <taxon>Bacteria</taxon>
        <taxon>Pseudomonadati</taxon>
        <taxon>Pseudomonadota</taxon>
        <taxon>Gammaproteobacteria</taxon>
        <taxon>Enterobacterales</taxon>
        <taxon>Enterobacteriaceae</taxon>
        <taxon>Enterobacter</taxon>
    </lineage>
</organism>
<reference key="1">
    <citation type="journal article" date="2010" name="PLoS Genet.">
        <title>Genome sequence of the plant growth promoting endophytic bacterium Enterobacter sp. 638.</title>
        <authorList>
            <person name="Taghavi S."/>
            <person name="van der Lelie D."/>
            <person name="Hoffman A."/>
            <person name="Zhang Y.B."/>
            <person name="Walla M.D."/>
            <person name="Vangronsveld J."/>
            <person name="Newman L."/>
            <person name="Monchy S."/>
        </authorList>
    </citation>
    <scope>NUCLEOTIDE SEQUENCE [LARGE SCALE GENOMIC DNA]</scope>
    <source>
        <strain>638</strain>
    </source>
</reference>
<protein>
    <recommendedName>
        <fullName evidence="1">Threonine/serine transporter TdcC</fullName>
    </recommendedName>
    <alternativeName>
        <fullName evidence="1">H(+)/threonine-serine symporter</fullName>
    </alternativeName>
</protein>